<protein>
    <recommendedName>
        <fullName>Immunoglobulin lambda-like polypeptide 1</fullName>
    </recommendedName>
    <alternativeName>
        <fullName>CD179 antigen-like family member B</fullName>
    </alternativeName>
    <alternativeName>
        <fullName>Ig lambda-5</fullName>
    </alternativeName>
    <cdAntigenName>CD179b</cdAntigenName>
</protein>
<reference key="1">
    <citation type="journal article" date="2005" name="Mol. Immunol.">
        <title>Mapping and functional analysis of regulatory sequences in the mouse lambda5-VpreB1 domain.</title>
        <authorList>
            <person name="Minaee S."/>
            <person name="Farmer D."/>
            <person name="Georgiou A."/>
            <person name="Sabbattini P."/>
            <person name="Webster Z."/>
            <person name="Chow C.-M."/>
            <person name="Dillon N."/>
        </authorList>
    </citation>
    <scope>NUCLEOTIDE SEQUENCE [GENOMIC DNA]</scope>
    <source>
        <strain>129</strain>
    </source>
</reference>
<reference key="2">
    <citation type="journal article" date="2009" name="PLoS Biol.">
        <title>Lineage-specific biology revealed by a finished genome assembly of the mouse.</title>
        <authorList>
            <person name="Church D.M."/>
            <person name="Goodstadt L."/>
            <person name="Hillier L.W."/>
            <person name="Zody M.C."/>
            <person name="Goldstein S."/>
            <person name="She X."/>
            <person name="Bult C.J."/>
            <person name="Agarwala R."/>
            <person name="Cherry J.L."/>
            <person name="DiCuccio M."/>
            <person name="Hlavina W."/>
            <person name="Kapustin Y."/>
            <person name="Meric P."/>
            <person name="Maglott D."/>
            <person name="Birtle Z."/>
            <person name="Marques A.C."/>
            <person name="Graves T."/>
            <person name="Zhou S."/>
            <person name="Teague B."/>
            <person name="Potamousis K."/>
            <person name="Churas C."/>
            <person name="Place M."/>
            <person name="Herschleb J."/>
            <person name="Runnheim R."/>
            <person name="Forrest D."/>
            <person name="Amos-Landgraf J."/>
            <person name="Schwartz D.C."/>
            <person name="Cheng Z."/>
            <person name="Lindblad-Toh K."/>
            <person name="Eichler E.E."/>
            <person name="Ponting C.P."/>
        </authorList>
    </citation>
    <scope>NUCLEOTIDE SEQUENCE [LARGE SCALE GENOMIC DNA]</scope>
    <source>
        <strain>C57BL/6J</strain>
    </source>
</reference>
<reference key="3">
    <citation type="journal article" date="1986" name="Nature">
        <title>Lambda 5, a new light-chain-related locus selectively expressed in pre-B lymphocytes.</title>
        <authorList>
            <person name="Sakaguchi N."/>
            <person name="Melchers F."/>
        </authorList>
    </citation>
    <scope>NUCLEOTIDE SEQUENCE [MRNA] OF 105-209</scope>
    <scope>TISSUE SPECIFICITY</scope>
</reference>
<reference key="4">
    <citation type="journal article" date="2018" name="J. Biol. Chem.">
        <title>The endoplasmic reticulum-resident E3 ubiquitin ligase Hrd1 controls a critical checkpoint in B cell development in mice.</title>
        <authorList>
            <person name="Yang Y."/>
            <person name="Kong S."/>
            <person name="Zhang Y."/>
            <person name="Melo-Cardenas J."/>
            <person name="Gao B."/>
            <person name="Zhang Y."/>
            <person name="Zhang D.D."/>
            <person name="Zhang B."/>
            <person name="Song J."/>
            <person name="Thorp E."/>
            <person name="Zhang K."/>
            <person name="Zhang J."/>
            <person name="Fang D."/>
        </authorList>
    </citation>
    <scope>SUBCELLULAR LOCATION</scope>
    <scope>INTERACTION WITH SYVN1</scope>
</reference>
<comment type="function">
    <text evidence="2">Critical for B-cell development.</text>
</comment>
<comment type="subunit">
    <text evidence="1 2 5">Interacts with VPREB1A (By similarity). Interacts with SYNV1/HRD1 (via N-terminus); this interaction leads to increased IGLL1 ubiquitination and degradation in pre-B cells, possibly through a lysosomal, not proteasomal, pathway (PubMed:29907570).</text>
</comment>
<comment type="subcellular location">
    <subcellularLocation>
        <location evidence="5">Endoplasmic reticulum</location>
    </subcellularLocation>
    <subcellularLocation>
        <location evidence="1">Secreted</location>
    </subcellularLocation>
    <text evidence="5">In pre-B cells, localizes predominantly to the endoplasmic reticulum.</text>
</comment>
<comment type="tissue specificity">
    <text evidence="6">Selectively expressed in pre-B lymphocytes.</text>
</comment>
<sequence>MKLRVGQTLGTIPRQCEVLLLLLLLGLVDGVHHILSPSSAERSRAVGPGASVGSNRPSLWALPGRLLFQIIPRGAGPRCSPHRLPSKPQFWYVFGGGTQLTILGQPKSDPLVTLFLPSLKNLQANKATLVCLVSEFYPGTLVVDWKVDGVPVTQGVETTQPSKQTNNKYMVSSYLTLISDQWMPHSRYSCRVTHEGNTVEKSVSPAECS</sequence>
<organism>
    <name type="scientific">Mus musculus</name>
    <name type="common">Mouse</name>
    <dbReference type="NCBI Taxonomy" id="10090"/>
    <lineage>
        <taxon>Eukaryota</taxon>
        <taxon>Metazoa</taxon>
        <taxon>Chordata</taxon>
        <taxon>Craniata</taxon>
        <taxon>Vertebrata</taxon>
        <taxon>Euteleostomi</taxon>
        <taxon>Mammalia</taxon>
        <taxon>Eutheria</taxon>
        <taxon>Euarchontoglires</taxon>
        <taxon>Glires</taxon>
        <taxon>Rodentia</taxon>
        <taxon>Myomorpha</taxon>
        <taxon>Muroidea</taxon>
        <taxon>Muridae</taxon>
        <taxon>Murinae</taxon>
        <taxon>Mus</taxon>
        <taxon>Mus</taxon>
    </lineage>
</organism>
<name>IGLL1_MOUSE</name>
<keyword id="KW-1015">Disulfide bond</keyword>
<keyword id="KW-0256">Endoplasmic reticulum</keyword>
<keyword id="KW-0393">Immunoglobulin domain</keyword>
<keyword id="KW-1185">Reference proteome</keyword>
<keyword id="KW-0964">Secreted</keyword>
<keyword id="KW-0732">Signal</keyword>
<gene>
    <name type="primary">Igll1</name>
    <name type="synonym">Igl-5</name>
</gene>
<accession>P20764</accession>
<accession>E9QMX0</accession>
<accession>Q5W1K3</accession>
<feature type="signal peptide" evidence="3">
    <location>
        <begin position="1"/>
        <end position="30"/>
    </location>
</feature>
<feature type="chain" id="PRO_0000153611" description="Immunoglobulin lambda-like polypeptide 1">
    <location>
        <begin position="31"/>
        <end position="209"/>
    </location>
</feature>
<feature type="domain" description="Ig-like C1-type">
    <location>
        <begin position="110"/>
        <end position="204"/>
    </location>
</feature>
<feature type="region of interest" description="J region" evidence="1">
    <location>
        <begin position="93"/>
        <end position="104"/>
    </location>
</feature>
<feature type="region of interest" description="C region" evidence="1">
    <location>
        <begin position="105"/>
        <end position="209"/>
    </location>
</feature>
<feature type="disulfide bond" evidence="4">
    <location>
        <begin position="131"/>
        <end position="190"/>
    </location>
</feature>
<feature type="disulfide bond" description="Interchain (with a heavy chain)" evidence="4">
    <location>
        <position position="208"/>
    </location>
</feature>
<feature type="sequence conflict" description="In Ref. 1; CAH68524." evidence="7" ref="1">
    <original>ANKATL</original>
    <variation>PTRPHV</variation>
    <location>
        <begin position="124"/>
        <end position="129"/>
    </location>
</feature>
<feature type="sequence conflict" description="In Ref. 3; M30387." evidence="7" ref="3">
    <original>T</original>
    <variation>Q</variation>
    <location>
        <position position="128"/>
    </location>
</feature>
<feature type="sequence conflict" description="In Ref. 3; M30387." evidence="7" ref="3">
    <original>Y</original>
    <variation>T</variation>
    <location>
        <position position="188"/>
    </location>
</feature>
<evidence type="ECO:0000250" key="1"/>
<evidence type="ECO:0000250" key="2">
    <source>
        <dbReference type="UniProtKB" id="P15814"/>
    </source>
</evidence>
<evidence type="ECO:0000255" key="3"/>
<evidence type="ECO:0000255" key="4">
    <source>
        <dbReference type="PROSITE-ProRule" id="PRU00114"/>
    </source>
</evidence>
<evidence type="ECO:0000269" key="5">
    <source>
    </source>
</evidence>
<evidence type="ECO:0000269" key="6">
    <source>
    </source>
</evidence>
<evidence type="ECO:0000305" key="7"/>
<proteinExistence type="evidence at protein level"/>
<dbReference type="EMBL" id="AJ852426">
    <property type="protein sequence ID" value="CAH68524.1"/>
    <property type="molecule type" value="Genomic_DNA"/>
</dbReference>
<dbReference type="EMBL" id="AC166832">
    <property type="status" value="NOT_ANNOTATED_CDS"/>
    <property type="molecule type" value="Genomic_DNA"/>
</dbReference>
<dbReference type="EMBL" id="M30387">
    <property type="status" value="NOT_ANNOTATED_CDS"/>
    <property type="molecule type" value="mRNA"/>
</dbReference>
<dbReference type="CCDS" id="CCDS49775.1"/>
<dbReference type="PIR" id="B26434">
    <property type="entry name" value="B26434"/>
</dbReference>
<dbReference type="RefSeq" id="NP_001177254.1">
    <property type="nucleotide sequence ID" value="NM_001190325.1"/>
</dbReference>
<dbReference type="EMDB" id="EMD-40456"/>
<dbReference type="EMDB" id="EMD-40457"/>
<dbReference type="EMDB" id="EMD-40467"/>
<dbReference type="SMR" id="P20764"/>
<dbReference type="BioGRID" id="200596">
    <property type="interactions" value="3"/>
</dbReference>
<dbReference type="FunCoup" id="P20764">
    <property type="interactions" value="314"/>
</dbReference>
<dbReference type="STRING" id="10090.ENSMUSP00000097713"/>
<dbReference type="PhosphoSitePlus" id="P20764"/>
<dbReference type="PaxDb" id="10090-ENSMUSP00000097713"/>
<dbReference type="ProteomicsDB" id="269386"/>
<dbReference type="Ensembl" id="ENSMUST00000100136.4">
    <property type="protein sequence ID" value="ENSMUSP00000097713.4"/>
    <property type="gene ID" value="ENSMUSG00000075370.13"/>
</dbReference>
<dbReference type="GeneID" id="16136"/>
<dbReference type="KEGG" id="mmu:16136"/>
<dbReference type="UCSC" id="uc007yje.1">
    <property type="organism name" value="mouse"/>
</dbReference>
<dbReference type="AGR" id="MGI:96529"/>
<dbReference type="CTD" id="3543"/>
<dbReference type="MGI" id="MGI:96529">
    <property type="gene designation" value="Igll1"/>
</dbReference>
<dbReference type="VEuPathDB" id="HostDB:ENSMUSG00000075370"/>
<dbReference type="eggNOG" id="ENOG502SS4M">
    <property type="taxonomic scope" value="Eukaryota"/>
</dbReference>
<dbReference type="GeneTree" id="ENSGT00940000164874"/>
<dbReference type="InParanoid" id="P20764"/>
<dbReference type="OMA" id="WGRFPLQ"/>
<dbReference type="OrthoDB" id="9049585at2759"/>
<dbReference type="PhylomeDB" id="P20764"/>
<dbReference type="TreeFam" id="TF335549"/>
<dbReference type="Reactome" id="R-MMU-166663">
    <property type="pathway name" value="Initial triggering of complement"/>
</dbReference>
<dbReference type="Reactome" id="R-MMU-173623">
    <property type="pathway name" value="Classical antibody-mediated complement activation"/>
</dbReference>
<dbReference type="Reactome" id="R-MMU-198933">
    <property type="pathway name" value="Immunoregulatory interactions between a Lymphoid and a non-Lymphoid cell"/>
</dbReference>
<dbReference type="Reactome" id="R-MMU-202733">
    <property type="pathway name" value="Cell surface interactions at the vascular wall"/>
</dbReference>
<dbReference type="Reactome" id="R-MMU-2029481">
    <property type="pathway name" value="FCGR activation"/>
</dbReference>
<dbReference type="Reactome" id="R-MMU-2029482">
    <property type="pathway name" value="Regulation of actin dynamics for phagocytic cup formation"/>
</dbReference>
<dbReference type="Reactome" id="R-MMU-2029485">
    <property type="pathway name" value="Role of phospholipids in phagocytosis"/>
</dbReference>
<dbReference type="Reactome" id="R-MMU-2168880">
    <property type="pathway name" value="Scavenging of heme from plasma"/>
</dbReference>
<dbReference type="Reactome" id="R-MMU-2454202">
    <property type="pathway name" value="Fc epsilon receptor (FCERI) signaling"/>
</dbReference>
<dbReference type="Reactome" id="R-MMU-2730905">
    <property type="pathway name" value="Role of LAT2/NTAL/LAB on calcium mobilization"/>
</dbReference>
<dbReference type="Reactome" id="R-MMU-2871796">
    <property type="pathway name" value="FCERI mediated MAPK activation"/>
</dbReference>
<dbReference type="Reactome" id="R-MMU-2871809">
    <property type="pathway name" value="FCERI mediated Ca+2 mobilization"/>
</dbReference>
<dbReference type="Reactome" id="R-MMU-2871837">
    <property type="pathway name" value="FCERI mediated NF-kB activation"/>
</dbReference>
<dbReference type="Reactome" id="R-MMU-5690714">
    <property type="pathway name" value="CD22 mediated BCR regulation"/>
</dbReference>
<dbReference type="Reactome" id="R-MMU-977606">
    <property type="pathway name" value="Regulation of Complement cascade"/>
</dbReference>
<dbReference type="Reactome" id="R-MMU-983695">
    <property type="pathway name" value="Antigen activates B Cell Receptor (BCR) leading to generation of second messengers"/>
</dbReference>
<dbReference type="BioGRID-ORCS" id="16136">
    <property type="hits" value="5 hits in 76 CRISPR screens"/>
</dbReference>
<dbReference type="ChiTaRS" id="Igll1">
    <property type="organism name" value="mouse"/>
</dbReference>
<dbReference type="PRO" id="PR:P20764"/>
<dbReference type="Proteomes" id="UP000000589">
    <property type="component" value="Chromosome 16"/>
</dbReference>
<dbReference type="RNAct" id="P20764">
    <property type="molecule type" value="protein"/>
</dbReference>
<dbReference type="Bgee" id="ENSMUSG00000075370">
    <property type="expression patterns" value="Expressed in bone marrow and 17 other cell types or tissues"/>
</dbReference>
<dbReference type="GO" id="GO:0005783">
    <property type="term" value="C:endoplasmic reticulum"/>
    <property type="evidence" value="ECO:0007669"/>
    <property type="project" value="UniProtKB-SubCell"/>
</dbReference>
<dbReference type="GO" id="GO:0005576">
    <property type="term" value="C:extracellular region"/>
    <property type="evidence" value="ECO:0007669"/>
    <property type="project" value="UniProtKB-SubCell"/>
</dbReference>
<dbReference type="CDD" id="cd07699">
    <property type="entry name" value="IgC1_L"/>
    <property type="match status" value="1"/>
</dbReference>
<dbReference type="FunFam" id="2.60.40.10:FF:000283">
    <property type="entry name" value="Immunoglobulin kappa constant"/>
    <property type="match status" value="1"/>
</dbReference>
<dbReference type="Gene3D" id="2.60.40.10">
    <property type="entry name" value="Immunoglobulins"/>
    <property type="match status" value="1"/>
</dbReference>
<dbReference type="InterPro" id="IPR007110">
    <property type="entry name" value="Ig-like_dom"/>
</dbReference>
<dbReference type="InterPro" id="IPR036179">
    <property type="entry name" value="Ig-like_dom_sf"/>
</dbReference>
<dbReference type="InterPro" id="IPR013783">
    <property type="entry name" value="Ig-like_fold"/>
</dbReference>
<dbReference type="InterPro" id="IPR003006">
    <property type="entry name" value="Ig/MHC_CS"/>
</dbReference>
<dbReference type="InterPro" id="IPR003597">
    <property type="entry name" value="Ig_C1-set"/>
</dbReference>
<dbReference type="InterPro" id="IPR050160">
    <property type="entry name" value="MHC/Immunoglobulin"/>
</dbReference>
<dbReference type="PANTHER" id="PTHR19944:SF98">
    <property type="entry name" value="IG-LIKE DOMAIN-CONTAINING PROTEIN"/>
    <property type="match status" value="1"/>
</dbReference>
<dbReference type="PANTHER" id="PTHR19944">
    <property type="entry name" value="MHC CLASS II-RELATED"/>
    <property type="match status" value="1"/>
</dbReference>
<dbReference type="Pfam" id="PF07654">
    <property type="entry name" value="C1-set"/>
    <property type="match status" value="1"/>
</dbReference>
<dbReference type="SMART" id="SM00407">
    <property type="entry name" value="IGc1"/>
    <property type="match status" value="1"/>
</dbReference>
<dbReference type="SUPFAM" id="SSF48726">
    <property type="entry name" value="Immunoglobulin"/>
    <property type="match status" value="1"/>
</dbReference>
<dbReference type="PROSITE" id="PS50835">
    <property type="entry name" value="IG_LIKE"/>
    <property type="match status" value="1"/>
</dbReference>
<dbReference type="PROSITE" id="PS00290">
    <property type="entry name" value="IG_MHC"/>
    <property type="match status" value="1"/>
</dbReference>